<comment type="function">
    <text evidence="1">Functions as a response regulator involved in His-to-Asp phosphorelay signal transduction system. Phosphorylation of the Asp residue in the receiver domain activates the ability of the protein to promote the transcription of target genes. Type-A response regulators seem to act as negative regulators of the cytokinin signaling.</text>
</comment>
<comment type="tissue specificity">
    <text evidence="4">Expressed in roots, leaf blades, leaf sheaths, shoot apex, flowers and panicles.</text>
</comment>
<comment type="induction">
    <text evidence="5 6 7">By cytokinin in roots, shoots and leaves (PubMed:17408920, PubMed:22383541). Induced by infection with the rice blast fungus Magnaporthe oryzae (PubMed:23234404).</text>
</comment>
<comment type="PTM">
    <text>Two-component system major event consists of a His-to-Asp phosphorelay between a sensor histidine kinase (HK) and a response regulator (RR). In plants, the His-to-Asp phosphorelay involves an additional intermediate named Histidine-containing phosphotransfer protein (HPt). This multistep phosphorelay consists of a His-Asp-His-Asp sequential transfer of a phosphate group between first a His and an Asp of the HK protein, followed by the transfer to a conserved His of the HPt protein and finally the transfer to an Asp in the receiver domain of the RR protein.</text>
</comment>
<comment type="disruption phenotype">
    <text evidence="3">Dwarf, narrow leaf, low tillering and sterility phenotypes.</text>
</comment>
<comment type="similarity">
    <text evidence="11">Belongs to the ARR family. Type-A subfamily.</text>
</comment>
<sequence>MAAAAQAPAAAKVVVATSPRAGGGGGGGGDRKVVPVVVAAAAGDEAQSEMHVLAVDDSSVDRAVIAKILRSSKYRVTTVESATRALELLCLGLVPNVNMIITDYWMPGMTGYELLKRVKESSQLKEIPVVIMSSENVPNRISRCLEEGAEDFLLKPVRPSDVSRLCSRIR</sequence>
<proteinExistence type="evidence at transcript level"/>
<gene>
    <name evidence="10" type="primary">RR6</name>
    <name evidence="12" type="ordered locus">Os04g0673300</name>
    <name evidence="11" type="ordered locus">LOC_Os04g57720</name>
    <name evidence="15" type="ORF">OsJ_16592</name>
    <name evidence="13" type="ORF">OSJNBa0018M05.2</name>
    <name evidence="14" type="ORF">OSJNBb0004A17.17</name>
</gene>
<name>ORR6_ORYSJ</name>
<keyword id="KW-0932">Cytokinin signaling pathway</keyword>
<keyword id="KW-0597">Phosphoprotein</keyword>
<keyword id="KW-1185">Reference proteome</keyword>
<keyword id="KW-0804">Transcription</keyword>
<keyword id="KW-0805">Transcription regulation</keyword>
<keyword id="KW-0902">Two-component regulatory system</keyword>
<feature type="chain" id="PRO_0000433826" description="Two-component response regulator ORR6">
    <location>
        <begin position="1"/>
        <end position="170"/>
    </location>
</feature>
<feature type="domain" description="Response regulatory" evidence="2">
    <location>
        <begin position="51"/>
        <end position="170"/>
    </location>
</feature>
<feature type="modified residue" description="4-aspartylphosphate" evidence="2">
    <location>
        <position position="103"/>
    </location>
</feature>
<protein>
    <recommendedName>
        <fullName evidence="11">Two-component response regulator ORR6</fullName>
    </recommendedName>
    <alternativeName>
        <fullName evidence="9">OsRR6</fullName>
    </alternativeName>
    <alternativeName>
        <fullName evidence="8">OsRRA6</fullName>
    </alternativeName>
</protein>
<reference key="1">
    <citation type="journal article" date="2006" name="Gene">
        <title>Identification and characterization of cytokinin-signalling gene families in rice.</title>
        <authorList>
            <person name="Ito Y."/>
            <person name="Kurata N."/>
        </authorList>
    </citation>
    <scope>NUCLEOTIDE SEQUENCE [GENOMIC DNA]</scope>
    <scope>TISSUE SPECIFICITY</scope>
    <source>
        <strain>cv. Nipponbare</strain>
    </source>
</reference>
<reference key="2">
    <citation type="journal article" date="2007" name="Plant Cell Physiol.">
        <title>Overexpression of a type-A response regulator alters rice morphology and cytokinin metabolism.</title>
        <authorList>
            <person name="Hirose N."/>
            <person name="Makita N."/>
            <person name="Kojima M."/>
            <person name="Kamada-Nobusada T."/>
            <person name="Sakakibara H."/>
        </authorList>
    </citation>
    <scope>NUCLEOTIDE SEQUENCE [MRNA]</scope>
    <source>
        <strain>cv. Nipponbare</strain>
    </source>
</reference>
<reference key="3">
    <citation type="journal article" date="2002" name="Nature">
        <title>Sequence and analysis of rice chromosome 4.</title>
        <authorList>
            <person name="Feng Q."/>
            <person name="Zhang Y."/>
            <person name="Hao P."/>
            <person name="Wang S."/>
            <person name="Fu G."/>
            <person name="Huang Y."/>
            <person name="Li Y."/>
            <person name="Zhu J."/>
            <person name="Liu Y."/>
            <person name="Hu X."/>
            <person name="Jia P."/>
            <person name="Zhang Y."/>
            <person name="Zhao Q."/>
            <person name="Ying K."/>
            <person name="Yu S."/>
            <person name="Tang Y."/>
            <person name="Weng Q."/>
            <person name="Zhang L."/>
            <person name="Lu Y."/>
            <person name="Mu J."/>
            <person name="Lu Y."/>
            <person name="Zhang L.S."/>
            <person name="Yu Z."/>
            <person name="Fan D."/>
            <person name="Liu X."/>
            <person name="Lu T."/>
            <person name="Li C."/>
            <person name="Wu Y."/>
            <person name="Sun T."/>
            <person name="Lei H."/>
            <person name="Li T."/>
            <person name="Hu H."/>
            <person name="Guan J."/>
            <person name="Wu M."/>
            <person name="Zhang R."/>
            <person name="Zhou B."/>
            <person name="Chen Z."/>
            <person name="Chen L."/>
            <person name="Jin Z."/>
            <person name="Wang R."/>
            <person name="Yin H."/>
            <person name="Cai Z."/>
            <person name="Ren S."/>
            <person name="Lv G."/>
            <person name="Gu W."/>
            <person name="Zhu G."/>
            <person name="Tu Y."/>
            <person name="Jia J."/>
            <person name="Zhang Y."/>
            <person name="Chen J."/>
            <person name="Kang H."/>
            <person name="Chen X."/>
            <person name="Shao C."/>
            <person name="Sun Y."/>
            <person name="Hu Q."/>
            <person name="Zhang X."/>
            <person name="Zhang W."/>
            <person name="Wang L."/>
            <person name="Ding C."/>
            <person name="Sheng H."/>
            <person name="Gu J."/>
            <person name="Chen S."/>
            <person name="Ni L."/>
            <person name="Zhu F."/>
            <person name="Chen W."/>
            <person name="Lan L."/>
            <person name="Lai Y."/>
            <person name="Cheng Z."/>
            <person name="Gu M."/>
            <person name="Jiang J."/>
            <person name="Li J."/>
            <person name="Hong G."/>
            <person name="Xue Y."/>
            <person name="Han B."/>
        </authorList>
    </citation>
    <scope>NUCLEOTIDE SEQUENCE [LARGE SCALE GENOMIC DNA]</scope>
    <source>
        <strain>cv. Nipponbare</strain>
    </source>
</reference>
<reference key="4">
    <citation type="journal article" date="2005" name="Nature">
        <title>The map-based sequence of the rice genome.</title>
        <authorList>
            <consortium name="International rice genome sequencing project (IRGSP)"/>
        </authorList>
    </citation>
    <scope>NUCLEOTIDE SEQUENCE [LARGE SCALE GENOMIC DNA]</scope>
    <source>
        <strain>cv. Nipponbare</strain>
    </source>
</reference>
<reference key="5">
    <citation type="journal article" date="2008" name="Nucleic Acids Res.">
        <title>The rice annotation project database (RAP-DB): 2008 update.</title>
        <authorList>
            <consortium name="The rice annotation project (RAP)"/>
        </authorList>
    </citation>
    <scope>GENOME REANNOTATION</scope>
    <source>
        <strain>cv. Nipponbare</strain>
    </source>
</reference>
<reference key="6">
    <citation type="journal article" date="2013" name="Rice">
        <title>Improvement of the Oryza sativa Nipponbare reference genome using next generation sequence and optical map data.</title>
        <authorList>
            <person name="Kawahara Y."/>
            <person name="de la Bastide M."/>
            <person name="Hamilton J.P."/>
            <person name="Kanamori H."/>
            <person name="McCombie W.R."/>
            <person name="Ouyang S."/>
            <person name="Schwartz D.C."/>
            <person name="Tanaka T."/>
            <person name="Wu J."/>
            <person name="Zhou S."/>
            <person name="Childs K.L."/>
            <person name="Davidson R.M."/>
            <person name="Lin H."/>
            <person name="Quesada-Ocampo L."/>
            <person name="Vaillancourt B."/>
            <person name="Sakai H."/>
            <person name="Lee S.S."/>
            <person name="Kim J."/>
            <person name="Numa H."/>
            <person name="Itoh T."/>
            <person name="Buell C.R."/>
            <person name="Matsumoto T."/>
        </authorList>
    </citation>
    <scope>GENOME REANNOTATION</scope>
    <source>
        <strain>cv. Nipponbare</strain>
    </source>
</reference>
<reference key="7">
    <citation type="journal article" date="2005" name="PLoS Biol.">
        <title>The genomes of Oryza sativa: a history of duplications.</title>
        <authorList>
            <person name="Yu J."/>
            <person name="Wang J."/>
            <person name="Lin W."/>
            <person name="Li S."/>
            <person name="Li H."/>
            <person name="Zhou J."/>
            <person name="Ni P."/>
            <person name="Dong W."/>
            <person name="Hu S."/>
            <person name="Zeng C."/>
            <person name="Zhang J."/>
            <person name="Zhang Y."/>
            <person name="Li R."/>
            <person name="Xu Z."/>
            <person name="Li S."/>
            <person name="Li X."/>
            <person name="Zheng H."/>
            <person name="Cong L."/>
            <person name="Lin L."/>
            <person name="Yin J."/>
            <person name="Geng J."/>
            <person name="Li G."/>
            <person name="Shi J."/>
            <person name="Liu J."/>
            <person name="Lv H."/>
            <person name="Li J."/>
            <person name="Wang J."/>
            <person name="Deng Y."/>
            <person name="Ran L."/>
            <person name="Shi X."/>
            <person name="Wang X."/>
            <person name="Wu Q."/>
            <person name="Li C."/>
            <person name="Ren X."/>
            <person name="Wang J."/>
            <person name="Wang X."/>
            <person name="Li D."/>
            <person name="Liu D."/>
            <person name="Zhang X."/>
            <person name="Ji Z."/>
            <person name="Zhao W."/>
            <person name="Sun Y."/>
            <person name="Zhang Z."/>
            <person name="Bao J."/>
            <person name="Han Y."/>
            <person name="Dong L."/>
            <person name="Ji J."/>
            <person name="Chen P."/>
            <person name="Wu S."/>
            <person name="Liu J."/>
            <person name="Xiao Y."/>
            <person name="Bu D."/>
            <person name="Tan J."/>
            <person name="Yang L."/>
            <person name="Ye C."/>
            <person name="Zhang J."/>
            <person name="Xu J."/>
            <person name="Zhou Y."/>
            <person name="Yu Y."/>
            <person name="Zhang B."/>
            <person name="Zhuang S."/>
            <person name="Wei H."/>
            <person name="Liu B."/>
            <person name="Lei M."/>
            <person name="Yu H."/>
            <person name="Li Y."/>
            <person name="Xu H."/>
            <person name="Wei S."/>
            <person name="He X."/>
            <person name="Fang L."/>
            <person name="Zhang Z."/>
            <person name="Zhang Y."/>
            <person name="Huang X."/>
            <person name="Su Z."/>
            <person name="Tong W."/>
            <person name="Li J."/>
            <person name="Tong Z."/>
            <person name="Li S."/>
            <person name="Ye J."/>
            <person name="Wang L."/>
            <person name="Fang L."/>
            <person name="Lei T."/>
            <person name="Chen C.-S."/>
            <person name="Chen H.-C."/>
            <person name="Xu Z."/>
            <person name="Li H."/>
            <person name="Huang H."/>
            <person name="Zhang F."/>
            <person name="Xu H."/>
            <person name="Li N."/>
            <person name="Zhao C."/>
            <person name="Li S."/>
            <person name="Dong L."/>
            <person name="Huang Y."/>
            <person name="Li L."/>
            <person name="Xi Y."/>
            <person name="Qi Q."/>
            <person name="Li W."/>
            <person name="Zhang B."/>
            <person name="Hu W."/>
            <person name="Zhang Y."/>
            <person name="Tian X."/>
            <person name="Jiao Y."/>
            <person name="Liang X."/>
            <person name="Jin J."/>
            <person name="Gao L."/>
            <person name="Zheng W."/>
            <person name="Hao B."/>
            <person name="Liu S.-M."/>
            <person name="Wang W."/>
            <person name="Yuan L."/>
            <person name="Cao M."/>
            <person name="McDermott J."/>
            <person name="Samudrala R."/>
            <person name="Wang J."/>
            <person name="Wong G.K.-S."/>
            <person name="Yang H."/>
        </authorList>
    </citation>
    <scope>NUCLEOTIDE SEQUENCE [LARGE SCALE GENOMIC DNA]</scope>
    <source>
        <strain>cv. Nipponbare</strain>
    </source>
</reference>
<reference key="8">
    <citation type="journal article" date="2003" name="Science">
        <title>Collection, mapping, and annotation of over 28,000 cDNA clones from japonica rice.</title>
        <authorList>
            <consortium name="The rice full-length cDNA consortium"/>
        </authorList>
    </citation>
    <scope>NUCLEOTIDE SEQUENCE [LARGE SCALE MRNA]</scope>
    <source>
        <strain>cv. Nipponbare</strain>
    </source>
</reference>
<reference key="9">
    <citation type="journal article" date="2006" name="Plant Physiol.">
        <title>Whole-genome analysis of Oryza sativa reveals similar architecture of two-component signaling machinery with Arabidopsis.</title>
        <authorList>
            <person name="Pareek A."/>
            <person name="Singh A."/>
            <person name="Kumar M."/>
            <person name="Kushwaha H.R."/>
            <person name="Lynn A.M."/>
            <person name="Singla-Pareek S.L."/>
        </authorList>
    </citation>
    <scope>DISRUPTION PHENOTYPE</scope>
</reference>
<reference key="10">
    <citation type="journal article" date="2007" name="Genomics">
        <title>The two-component signal system in rice (Oryza sativa L.): a genome-wide study of cytokinin signal perception and transduction.</title>
        <authorList>
            <person name="Du L."/>
            <person name="Jiao F."/>
            <person name="Chu J."/>
            <person name="Jin G."/>
            <person name="Chen M."/>
            <person name="Wu P."/>
        </authorList>
    </citation>
    <scope>INDUCTION BY CYTOKININ</scope>
</reference>
<reference key="11">
    <citation type="journal article" date="2007" name="Plant Physiol.">
        <title>Nomenclature for two-component signaling elements of rice.</title>
        <authorList>
            <person name="Schaller G.E."/>
            <person name="Doi K."/>
            <person name="Hwang I."/>
            <person name="Kieber J.J."/>
            <person name="Khurana J.P."/>
            <person name="Kurata N."/>
            <person name="Mizuno T."/>
            <person name="Pareek A."/>
            <person name="Shiu S.H."/>
            <person name="Wu P."/>
            <person name="Yip W.K."/>
        </authorList>
    </citation>
    <scope>GENE FAMILY</scope>
    <scope>NOMENCLATURE</scope>
</reference>
<reference key="12">
    <citation type="journal article" date="2012" name="Plant Physiol.">
        <title>Characterization of genes involved in cytokinin signaling and metabolism from rice.</title>
        <authorList>
            <person name="Tsai Y.C."/>
            <person name="Weir N.R."/>
            <person name="Hill K."/>
            <person name="Zhang W."/>
            <person name="Kim H.J."/>
            <person name="Shiu S.H."/>
            <person name="Schaller G.E."/>
            <person name="Kieber J.J."/>
        </authorList>
    </citation>
    <scope>INDUCTION BY CYTOKININ</scope>
</reference>
<reference key="13">
    <citation type="journal article" date="2013" name="Mol. Plant Microbe Interact.">
        <title>Cytokinins act synergistically with salicylic acid to activate defense gene expression in rice.</title>
        <authorList>
            <person name="Jiang C.J."/>
            <person name="Shimono M."/>
            <person name="Sugano S."/>
            <person name="Kojima M."/>
            <person name="Liu X."/>
            <person name="Inoue H."/>
            <person name="Sakakibara H."/>
            <person name="Takatsuji H."/>
        </authorList>
    </citation>
    <scope>INDUCTION BY RICE BLAST FUNGUS</scope>
</reference>
<organism>
    <name type="scientific">Oryza sativa subsp. japonica</name>
    <name type="common">Rice</name>
    <dbReference type="NCBI Taxonomy" id="39947"/>
    <lineage>
        <taxon>Eukaryota</taxon>
        <taxon>Viridiplantae</taxon>
        <taxon>Streptophyta</taxon>
        <taxon>Embryophyta</taxon>
        <taxon>Tracheophyta</taxon>
        <taxon>Spermatophyta</taxon>
        <taxon>Magnoliopsida</taxon>
        <taxon>Liliopsida</taxon>
        <taxon>Poales</taxon>
        <taxon>Poaceae</taxon>
        <taxon>BOP clade</taxon>
        <taxon>Oryzoideae</taxon>
        <taxon>Oryzeae</taxon>
        <taxon>Oryzinae</taxon>
        <taxon>Oryza</taxon>
        <taxon>Oryza sativa</taxon>
    </lineage>
</organism>
<evidence type="ECO:0000250" key="1">
    <source>
        <dbReference type="UniProtKB" id="Q9ZWS9"/>
    </source>
</evidence>
<evidence type="ECO:0000255" key="2">
    <source>
        <dbReference type="PROSITE-ProRule" id="PRU00169"/>
    </source>
</evidence>
<evidence type="ECO:0000269" key="3">
    <source>
    </source>
</evidence>
<evidence type="ECO:0000269" key="4">
    <source>
    </source>
</evidence>
<evidence type="ECO:0000269" key="5">
    <source>
    </source>
</evidence>
<evidence type="ECO:0000269" key="6">
    <source>
    </source>
</evidence>
<evidence type="ECO:0000269" key="7">
    <source>
    </source>
</evidence>
<evidence type="ECO:0000303" key="8">
    <source>
    </source>
</evidence>
<evidence type="ECO:0000303" key="9">
    <source>
    </source>
</evidence>
<evidence type="ECO:0000303" key="10">
    <source>
    </source>
</evidence>
<evidence type="ECO:0000305" key="11"/>
<evidence type="ECO:0000312" key="12">
    <source>
        <dbReference type="EMBL" id="BAF16145.1"/>
    </source>
</evidence>
<evidence type="ECO:0000312" key="13">
    <source>
        <dbReference type="EMBL" id="CAE03227.1"/>
    </source>
</evidence>
<evidence type="ECO:0000312" key="14">
    <source>
        <dbReference type="EMBL" id="CAJ14992.1"/>
    </source>
</evidence>
<evidence type="ECO:0000312" key="15">
    <source>
        <dbReference type="EMBL" id="EAZ32382.1"/>
    </source>
</evidence>
<dbReference type="EMBL" id="BR000315">
    <property type="protein sequence ID" value="FAA00267.1"/>
    <property type="molecule type" value="Genomic_DNA"/>
</dbReference>
<dbReference type="EMBL" id="AB249653">
    <property type="protein sequence ID" value="BAE79347.1"/>
    <property type="molecule type" value="mRNA"/>
</dbReference>
<dbReference type="EMBL" id="AL606457">
    <property type="protein sequence ID" value="CAE03227.1"/>
    <property type="molecule type" value="Genomic_DNA"/>
</dbReference>
<dbReference type="EMBL" id="AL606652">
    <property type="protein sequence ID" value="CAJ14992.1"/>
    <property type="molecule type" value="Genomic_DNA"/>
</dbReference>
<dbReference type="EMBL" id="AP008210">
    <property type="protein sequence ID" value="BAF16145.1"/>
    <property type="molecule type" value="Genomic_DNA"/>
</dbReference>
<dbReference type="EMBL" id="AP014960">
    <property type="protein sequence ID" value="BAS91589.1"/>
    <property type="molecule type" value="Genomic_DNA"/>
</dbReference>
<dbReference type="EMBL" id="CM000141">
    <property type="protein sequence ID" value="EAZ32382.1"/>
    <property type="molecule type" value="Genomic_DNA"/>
</dbReference>
<dbReference type="EMBL" id="AK059734">
    <property type="protein sequence ID" value="BAG87091.1"/>
    <property type="molecule type" value="mRNA"/>
</dbReference>
<dbReference type="RefSeq" id="XP_015634156.1">
    <property type="nucleotide sequence ID" value="XM_015778670.1"/>
</dbReference>
<dbReference type="SMR" id="Q7XQA6"/>
<dbReference type="FunCoup" id="Q7XQA6">
    <property type="interactions" value="29"/>
</dbReference>
<dbReference type="STRING" id="39947.Q7XQA6"/>
<dbReference type="PaxDb" id="39947-Q7XQA6"/>
<dbReference type="EnsemblPlants" id="Os04t0673300-01">
    <property type="protein sequence ID" value="Os04t0673300-01"/>
    <property type="gene ID" value="Os04g0673300"/>
</dbReference>
<dbReference type="Gramene" id="Os04t0673300-01">
    <property type="protein sequence ID" value="Os04t0673300-01"/>
    <property type="gene ID" value="Os04g0673300"/>
</dbReference>
<dbReference type="KEGG" id="dosa:Os04g0673300"/>
<dbReference type="eggNOG" id="KOG1601">
    <property type="taxonomic scope" value="Eukaryota"/>
</dbReference>
<dbReference type="HOGENOM" id="CLU_000445_69_5_1"/>
<dbReference type="InParanoid" id="Q7XQA6"/>
<dbReference type="OMA" id="MSMEMLL"/>
<dbReference type="OrthoDB" id="60033at2759"/>
<dbReference type="Proteomes" id="UP000000763">
    <property type="component" value="Chromosome 4"/>
</dbReference>
<dbReference type="Proteomes" id="UP000007752">
    <property type="component" value="Chromosome 4"/>
</dbReference>
<dbReference type="Proteomes" id="UP000059680">
    <property type="component" value="Chromosome 4"/>
</dbReference>
<dbReference type="GO" id="GO:0009736">
    <property type="term" value="P:cytokinin-activated signaling pathway"/>
    <property type="evidence" value="ECO:0007669"/>
    <property type="project" value="UniProtKB-KW"/>
</dbReference>
<dbReference type="GO" id="GO:0000160">
    <property type="term" value="P:phosphorelay signal transduction system"/>
    <property type="evidence" value="ECO:0007669"/>
    <property type="project" value="UniProtKB-KW"/>
</dbReference>
<dbReference type="CDD" id="cd17581">
    <property type="entry name" value="REC_typeA_ARR"/>
    <property type="match status" value="1"/>
</dbReference>
<dbReference type="FunFam" id="3.40.50.2300:FF:000159">
    <property type="entry name" value="Two-component response regulator ORR5"/>
    <property type="match status" value="1"/>
</dbReference>
<dbReference type="Gene3D" id="3.40.50.2300">
    <property type="match status" value="1"/>
</dbReference>
<dbReference type="InterPro" id="IPR045279">
    <property type="entry name" value="ARR-like"/>
</dbReference>
<dbReference type="InterPro" id="IPR011006">
    <property type="entry name" value="CheY-like_superfamily"/>
</dbReference>
<dbReference type="InterPro" id="IPR001789">
    <property type="entry name" value="Sig_transdc_resp-reg_receiver"/>
</dbReference>
<dbReference type="PANTHER" id="PTHR43874">
    <property type="entry name" value="TWO-COMPONENT RESPONSE REGULATOR"/>
    <property type="match status" value="1"/>
</dbReference>
<dbReference type="PANTHER" id="PTHR43874:SF213">
    <property type="entry name" value="TWO-COMPONENT RESPONSE REGULATOR ORR6"/>
    <property type="match status" value="1"/>
</dbReference>
<dbReference type="Pfam" id="PF00072">
    <property type="entry name" value="Response_reg"/>
    <property type="match status" value="1"/>
</dbReference>
<dbReference type="SMART" id="SM00448">
    <property type="entry name" value="REC"/>
    <property type="match status" value="1"/>
</dbReference>
<dbReference type="SUPFAM" id="SSF52172">
    <property type="entry name" value="CheY-like"/>
    <property type="match status" value="1"/>
</dbReference>
<dbReference type="PROSITE" id="PS50110">
    <property type="entry name" value="RESPONSE_REGULATORY"/>
    <property type="match status" value="1"/>
</dbReference>
<accession>Q7XQA6</accession>
<accession>A0A0P0WG87</accession>
<accession>Q4JF20</accession>